<keyword id="KW-0002">3D-structure</keyword>
<keyword id="KW-0175">Coiled coil</keyword>
<keyword id="KW-1015">Disulfide bond</keyword>
<keyword id="KW-0325">Glycoprotein</keyword>
<keyword id="KW-1267">Proteomics identification</keyword>
<keyword id="KW-1185">Reference proteome</keyword>
<keyword id="KW-0964">Secreted</keyword>
<keyword id="KW-0732">Signal</keyword>
<comment type="function">
    <text evidence="11">Plays a role in the regulation of innate resistance to pathogens, inflammatory reactions, possibly clearance of self-components and female fertility.</text>
</comment>
<comment type="subunit">
    <text evidence="1 6">Homooctamer; disulfide-linked (PubMed:18223257). Binds to C1q (By similarity).</text>
</comment>
<comment type="subunit">
    <text evidence="7">(Microbial infection) Interacts with SARS coronavirus-2/SARS-CoV-2 Nucleoprotein and Spike protein homotrimer.</text>
</comment>
<comment type="interaction">
    <interactant intactId="EBI-11574553">
        <id>P26022</id>
    </interactant>
    <interactant intactId="EBI-1223708">
        <id>P08603</id>
        <label>CFH</label>
    </interactant>
    <organismsDiffer>false</organismsDiffer>
    <experiments>15</experiments>
</comment>
<comment type="interaction">
    <interactant intactId="EBI-11574553">
        <id>P26022</id>
    </interactant>
    <interactant intactId="EBI-12684810">
        <id>P08603-2</id>
        <label>CFH</label>
    </interactant>
    <organismsDiffer>false</organismsDiffer>
    <experiments>2</experiments>
</comment>
<comment type="interaction">
    <interactant intactId="EBI-11574553">
        <id>P26022</id>
    </interactant>
    <interactant intactId="EBI-5282479">
        <id>O00602</id>
        <label>FCN1</label>
    </interactant>
    <organismsDiffer>false</organismsDiffer>
    <experiments>3</experiments>
</comment>
<comment type="interaction">
    <interactant intactId="EBI-11574553">
        <id>P26022</id>
    </interactant>
    <interactant intactId="EBI-11784425">
        <id>PRO_0000009136</id>
        <label>FCN1</label>
        <dbReference type="UniProtKB" id="O00602"/>
    </interactant>
    <organismsDiffer>false</organismsDiffer>
    <experiments>7</experiments>
</comment>
<comment type="interaction">
    <interactant intactId="EBI-11574553">
        <id>P26022</id>
    </interactant>
    <interactant intactId="EBI-7468784">
        <id>Q15485</id>
        <label>FCN2</label>
    </interactant>
    <organismsDiffer>false</organismsDiffer>
    <experiments>7</experiments>
</comment>
<comment type="interaction">
    <interactant intactId="EBI-11574553">
        <id>P26022</id>
    </interactant>
    <interactant intactId="EBI-977447">
        <id>P09038</id>
        <label>FGF2</label>
    </interactant>
    <organismsDiffer>false</organismsDiffer>
    <experiments>16</experiments>
</comment>
<comment type="interaction">
    <interactant intactId="EBI-11574553">
        <id>P26022</id>
    </interactant>
    <interactant intactId="EBI-11574553">
        <id>P26022</id>
        <label>PTX3</label>
    </interactant>
    <organismsDiffer>false</organismsDiffer>
    <experiments>17</experiments>
</comment>
<comment type="interaction">
    <interactant intactId="EBI-11574553">
        <id>P26022</id>
    </interactant>
    <interactant intactId="EBI-11700693">
        <id>P98066</id>
        <label>TNFAIP6</label>
    </interactant>
    <organismsDiffer>false</organismsDiffer>
    <experiments>8</experiments>
</comment>
<comment type="interaction">
    <interactant intactId="EBI-11574553">
        <id>P26022</id>
    </interactant>
    <interactant intactId="EBI-25475856">
        <id>P0DTC9</id>
        <label>N</label>
    </interactant>
    <organismsDiffer>true</organismsDiffer>
    <experiments>2</experiments>
</comment>
<comment type="interaction">
    <interactant intactId="EBI-22114950">
        <id>PRO_0000023545</id>
    </interactant>
    <interactant intactId="EBI-1223708">
        <id>P08603</id>
        <label>CFH</label>
    </interactant>
    <organismsDiffer>false</organismsDiffer>
    <experiments>8</experiments>
</comment>
<comment type="interaction">
    <interactant intactId="EBI-22114950">
        <id>PRO_0000023545</id>
    </interactant>
    <interactant intactId="EBI-12684810">
        <id>P08603-2</id>
        <label>CFH</label>
    </interactant>
    <organismsDiffer>false</organismsDiffer>
    <experiments>2</experiments>
</comment>
<comment type="interaction">
    <interactant intactId="EBI-22114950">
        <id>PRO_0000023545</id>
    </interactant>
    <interactant intactId="EBI-3935840">
        <id>Q03591</id>
        <label>CFHR1</label>
    </interactant>
    <organismsDiffer>false</organismsDiffer>
    <experiments>5</experiments>
</comment>
<comment type="subcellular location">
    <subcellularLocation>
        <location>Secreted</location>
    </subcellularLocation>
</comment>
<comment type="induction">
    <text>By IL1B/interleukin-1 beta and TNF.</text>
</comment>
<comment type="PTM">
    <text evidence="10">Glycosylated.</text>
</comment>
<organism>
    <name type="scientific">Homo sapiens</name>
    <name type="common">Human</name>
    <dbReference type="NCBI Taxonomy" id="9606"/>
    <lineage>
        <taxon>Eukaryota</taxon>
        <taxon>Metazoa</taxon>
        <taxon>Chordata</taxon>
        <taxon>Craniata</taxon>
        <taxon>Vertebrata</taxon>
        <taxon>Euteleostomi</taxon>
        <taxon>Mammalia</taxon>
        <taxon>Eutheria</taxon>
        <taxon>Euarchontoglires</taxon>
        <taxon>Primates</taxon>
        <taxon>Haplorrhini</taxon>
        <taxon>Catarrhini</taxon>
        <taxon>Hominidae</taxon>
        <taxon>Homo</taxon>
    </lineage>
</organism>
<dbReference type="EMBL" id="X63613">
    <property type="protein sequence ID" value="CAA45158.1"/>
    <property type="molecule type" value="mRNA"/>
</dbReference>
<dbReference type="EMBL" id="X63053">
    <property type="protein sequence ID" value="CAA44778.1"/>
    <property type="molecule type" value="mRNA"/>
</dbReference>
<dbReference type="EMBL" id="M31166">
    <property type="protein sequence ID" value="AAA61234.1"/>
    <property type="molecule type" value="mRNA"/>
</dbReference>
<dbReference type="EMBL" id="DQ207368">
    <property type="protein sequence ID" value="ABA64467.1"/>
    <property type="molecule type" value="Genomic_DNA"/>
</dbReference>
<dbReference type="EMBL" id="AK312705">
    <property type="protein sequence ID" value="BAG35583.1"/>
    <property type="molecule type" value="mRNA"/>
</dbReference>
<dbReference type="EMBL" id="AC020630">
    <property type="status" value="NOT_ANNOTATED_CDS"/>
    <property type="molecule type" value="Genomic_DNA"/>
</dbReference>
<dbReference type="EMBL" id="CH471052">
    <property type="protein sequence ID" value="EAW78708.1"/>
    <property type="molecule type" value="Genomic_DNA"/>
</dbReference>
<dbReference type="EMBL" id="BC039733">
    <property type="protein sequence ID" value="AAH39733.1"/>
    <property type="molecule type" value="mRNA"/>
</dbReference>
<dbReference type="CCDS" id="CCDS3180.1"/>
<dbReference type="PIR" id="A44323">
    <property type="entry name" value="A44323"/>
</dbReference>
<dbReference type="RefSeq" id="NP_002843.2">
    <property type="nucleotide sequence ID" value="NM_002852.4"/>
</dbReference>
<dbReference type="PDB" id="7ZL1">
    <property type="method" value="EM"/>
    <property type="resolution" value="2.50 A"/>
    <property type="chains" value="A/B/C/D/E/F/G/H=18-381"/>
</dbReference>
<dbReference type="PDB" id="8PVQ">
    <property type="method" value="X-ray"/>
    <property type="resolution" value="2.43 A"/>
    <property type="chains" value="A=178-381"/>
</dbReference>
<dbReference type="PDB" id="8S50">
    <property type="method" value="EM"/>
    <property type="resolution" value="3.33 A"/>
    <property type="chains" value="A/B/C/D/F/G/J/K=18-381"/>
</dbReference>
<dbReference type="PDBsum" id="7ZL1"/>
<dbReference type="PDBsum" id="8PVQ"/>
<dbReference type="PDBsum" id="8S50"/>
<dbReference type="EMDB" id="EMD-14774"/>
<dbReference type="EMDB" id="EMD-14775"/>
<dbReference type="EMDB" id="EMD-19717"/>
<dbReference type="SMR" id="P26022"/>
<dbReference type="BioGRID" id="111770">
    <property type="interactions" value="74"/>
</dbReference>
<dbReference type="FunCoup" id="P26022">
    <property type="interactions" value="224"/>
</dbReference>
<dbReference type="IntAct" id="P26022">
    <property type="interactions" value="61"/>
</dbReference>
<dbReference type="STRING" id="9606.ENSP00000295927"/>
<dbReference type="UniLectin" id="P26022"/>
<dbReference type="GlyConnect" id="704">
    <property type="glycosylation" value="1 N-Linked glycan (1 site)"/>
</dbReference>
<dbReference type="GlyCosmos" id="P26022">
    <property type="glycosylation" value="3 sites, 3 glycans"/>
</dbReference>
<dbReference type="GlyGen" id="P26022">
    <property type="glycosylation" value="3 sites, 5 N-linked glycans (1 site), 1 O-linked glycan (2 sites)"/>
</dbReference>
<dbReference type="iPTMnet" id="P26022"/>
<dbReference type="PhosphoSitePlus" id="P26022"/>
<dbReference type="BioMuta" id="PTX3"/>
<dbReference type="DMDM" id="296452984"/>
<dbReference type="jPOST" id="P26022"/>
<dbReference type="MassIVE" id="P26022"/>
<dbReference type="PaxDb" id="9606-ENSP00000295927"/>
<dbReference type="PeptideAtlas" id="P26022"/>
<dbReference type="ProteomicsDB" id="54310"/>
<dbReference type="Antibodypedia" id="33649">
    <property type="antibodies" value="480 antibodies from 37 providers"/>
</dbReference>
<dbReference type="DNASU" id="5806"/>
<dbReference type="Ensembl" id="ENST00000295927.4">
    <property type="protein sequence ID" value="ENSP00000295927.3"/>
    <property type="gene ID" value="ENSG00000163661.4"/>
</dbReference>
<dbReference type="GeneID" id="5806"/>
<dbReference type="KEGG" id="hsa:5806"/>
<dbReference type="MANE-Select" id="ENST00000295927.4">
    <property type="protein sequence ID" value="ENSP00000295927.3"/>
    <property type="RefSeq nucleotide sequence ID" value="NM_002852.4"/>
    <property type="RefSeq protein sequence ID" value="NP_002843.2"/>
</dbReference>
<dbReference type="UCSC" id="uc003fbl.5">
    <property type="organism name" value="human"/>
</dbReference>
<dbReference type="AGR" id="HGNC:9692"/>
<dbReference type="CTD" id="5806"/>
<dbReference type="DisGeNET" id="5806"/>
<dbReference type="GeneCards" id="PTX3"/>
<dbReference type="HGNC" id="HGNC:9692">
    <property type="gene designation" value="PTX3"/>
</dbReference>
<dbReference type="HPA" id="ENSG00000163661">
    <property type="expression patterns" value="Tissue enhanced (adipose tissue, urinary bladder)"/>
</dbReference>
<dbReference type="MalaCards" id="PTX3"/>
<dbReference type="MIM" id="602492">
    <property type="type" value="gene"/>
</dbReference>
<dbReference type="neXtProt" id="NX_P26022"/>
<dbReference type="OpenTargets" id="ENSG00000163661"/>
<dbReference type="PharmGKB" id="PA34036"/>
<dbReference type="VEuPathDB" id="HostDB:ENSG00000163661"/>
<dbReference type="eggNOG" id="ENOG502QUBX">
    <property type="taxonomic scope" value="Eukaryota"/>
</dbReference>
<dbReference type="GeneTree" id="ENSGT01100000263515"/>
<dbReference type="HOGENOM" id="CLU_725544_0_0_1"/>
<dbReference type="InParanoid" id="P26022"/>
<dbReference type="OMA" id="ISCDCQR"/>
<dbReference type="OrthoDB" id="10009351at2759"/>
<dbReference type="PAN-GO" id="P26022">
    <property type="GO annotations" value="4 GO annotations based on evolutionary models"/>
</dbReference>
<dbReference type="PhylomeDB" id="P26022"/>
<dbReference type="TreeFam" id="TF330208"/>
<dbReference type="PathwayCommons" id="P26022"/>
<dbReference type="Reactome" id="R-HSA-6798695">
    <property type="pathway name" value="Neutrophil degranulation"/>
</dbReference>
<dbReference type="SignaLink" id="P26022"/>
<dbReference type="SIGNOR" id="P26022"/>
<dbReference type="BioGRID-ORCS" id="5806">
    <property type="hits" value="13 hits in 1145 CRISPR screens"/>
</dbReference>
<dbReference type="ChiTaRS" id="PTX3">
    <property type="organism name" value="human"/>
</dbReference>
<dbReference type="GeneWiki" id="PTX3"/>
<dbReference type="GenomeRNAi" id="5806"/>
<dbReference type="Pharos" id="P26022">
    <property type="development level" value="Tbio"/>
</dbReference>
<dbReference type="PRO" id="PR:P26022"/>
<dbReference type="Proteomes" id="UP000005640">
    <property type="component" value="Chromosome 3"/>
</dbReference>
<dbReference type="RNAct" id="P26022">
    <property type="molecule type" value="protein"/>
</dbReference>
<dbReference type="Bgee" id="ENSG00000163661">
    <property type="expression patterns" value="Expressed in cartilage tissue and 146 other cell types or tissues"/>
</dbReference>
<dbReference type="GO" id="GO:0031012">
    <property type="term" value="C:extracellular matrix"/>
    <property type="evidence" value="ECO:0007669"/>
    <property type="project" value="Ensembl"/>
</dbReference>
<dbReference type="GO" id="GO:0005576">
    <property type="term" value="C:extracellular region"/>
    <property type="evidence" value="ECO:0000304"/>
    <property type="project" value="Reactome"/>
</dbReference>
<dbReference type="GO" id="GO:0005615">
    <property type="term" value="C:extracellular space"/>
    <property type="evidence" value="ECO:0000314"/>
    <property type="project" value="BHF-UCL"/>
</dbReference>
<dbReference type="GO" id="GO:0035580">
    <property type="term" value="C:specific granule lumen"/>
    <property type="evidence" value="ECO:0000304"/>
    <property type="project" value="Reactome"/>
</dbReference>
<dbReference type="GO" id="GO:1904724">
    <property type="term" value="C:tertiary granule lumen"/>
    <property type="evidence" value="ECO:0000304"/>
    <property type="project" value="Reactome"/>
</dbReference>
<dbReference type="GO" id="GO:0001872">
    <property type="term" value="F:(1-&gt;3)-beta-D-glucan binding"/>
    <property type="evidence" value="ECO:0007669"/>
    <property type="project" value="Ensembl"/>
</dbReference>
<dbReference type="GO" id="GO:0001849">
    <property type="term" value="F:complement component C1q complex binding"/>
    <property type="evidence" value="ECO:0000314"/>
    <property type="project" value="BHF-UCL"/>
</dbReference>
<dbReference type="GO" id="GO:0042802">
    <property type="term" value="F:identical protein binding"/>
    <property type="evidence" value="ECO:0000353"/>
    <property type="project" value="IntAct"/>
</dbReference>
<dbReference type="GO" id="GO:0046790">
    <property type="term" value="F:virion binding"/>
    <property type="evidence" value="ECO:0000314"/>
    <property type="project" value="BHF-UCL"/>
</dbReference>
<dbReference type="GO" id="GO:0030198">
    <property type="term" value="P:extracellular matrix organization"/>
    <property type="evidence" value="ECO:0007669"/>
    <property type="project" value="Ensembl"/>
</dbReference>
<dbReference type="GO" id="GO:0046597">
    <property type="term" value="P:host-mediated suppression of symbiont invasion"/>
    <property type="evidence" value="ECO:0000314"/>
    <property type="project" value="BHF-UCL"/>
</dbReference>
<dbReference type="GO" id="GO:0006954">
    <property type="term" value="P:inflammatory response"/>
    <property type="evidence" value="ECO:0000304"/>
    <property type="project" value="ProtInc"/>
</dbReference>
<dbReference type="GO" id="GO:0045087">
    <property type="term" value="P:innate immune response"/>
    <property type="evidence" value="ECO:0000314"/>
    <property type="project" value="BHF-UCL"/>
</dbReference>
<dbReference type="GO" id="GO:0044871">
    <property type="term" value="P:negative regulation by host of viral glycoprotein metabolic process"/>
    <property type="evidence" value="ECO:0000314"/>
    <property type="project" value="BHF-UCL"/>
</dbReference>
<dbReference type="GO" id="GO:0044793">
    <property type="term" value="P:negative regulation by host of viral process"/>
    <property type="evidence" value="ECO:0000318"/>
    <property type="project" value="GO_Central"/>
</dbReference>
<dbReference type="GO" id="GO:1903019">
    <property type="term" value="P:negative regulation of glycoprotein metabolic process"/>
    <property type="evidence" value="ECO:0000314"/>
    <property type="project" value="BHF-UCL"/>
</dbReference>
<dbReference type="GO" id="GO:0008228">
    <property type="term" value="P:opsonization"/>
    <property type="evidence" value="ECO:0007669"/>
    <property type="project" value="Ensembl"/>
</dbReference>
<dbReference type="GO" id="GO:0001550">
    <property type="term" value="P:ovarian cumulus expansion"/>
    <property type="evidence" value="ECO:0007669"/>
    <property type="project" value="Ensembl"/>
</dbReference>
<dbReference type="GO" id="GO:0045429">
    <property type="term" value="P:positive regulation of nitric oxide biosynthetic process"/>
    <property type="evidence" value="ECO:0007669"/>
    <property type="project" value="Ensembl"/>
</dbReference>
<dbReference type="GO" id="GO:0050766">
    <property type="term" value="P:positive regulation of phagocytosis"/>
    <property type="evidence" value="ECO:0007669"/>
    <property type="project" value="Ensembl"/>
</dbReference>
<dbReference type="GO" id="GO:0001878">
    <property type="term" value="P:response to yeast"/>
    <property type="evidence" value="ECO:0007669"/>
    <property type="project" value="Ensembl"/>
</dbReference>
<dbReference type="CDD" id="cd00152">
    <property type="entry name" value="PTX"/>
    <property type="match status" value="1"/>
</dbReference>
<dbReference type="FunFam" id="2.60.120.200:FF:000110">
    <property type="entry name" value="pentraxin-related protein PTX3"/>
    <property type="match status" value="1"/>
</dbReference>
<dbReference type="Gene3D" id="2.60.120.200">
    <property type="match status" value="1"/>
</dbReference>
<dbReference type="InterPro" id="IPR013320">
    <property type="entry name" value="ConA-like_dom_sf"/>
</dbReference>
<dbReference type="InterPro" id="IPR006558">
    <property type="entry name" value="LamG-like"/>
</dbReference>
<dbReference type="InterPro" id="IPR030476">
    <property type="entry name" value="Pentaxin_CS"/>
</dbReference>
<dbReference type="InterPro" id="IPR001759">
    <property type="entry name" value="Pentraxin-related"/>
</dbReference>
<dbReference type="InterPro" id="IPR042837">
    <property type="entry name" value="PTX3"/>
</dbReference>
<dbReference type="PANTHER" id="PTHR46943">
    <property type="entry name" value="PENTRAXIN-RELATED PROTEIN PTX3"/>
    <property type="match status" value="1"/>
</dbReference>
<dbReference type="PANTHER" id="PTHR46943:SF1">
    <property type="entry name" value="PENTRAXIN-RELATED PROTEIN PTX3"/>
    <property type="match status" value="1"/>
</dbReference>
<dbReference type="Pfam" id="PF00354">
    <property type="entry name" value="Pentaxin"/>
    <property type="match status" value="1"/>
</dbReference>
<dbReference type="PRINTS" id="PR00895">
    <property type="entry name" value="PENTAXIN"/>
</dbReference>
<dbReference type="SMART" id="SM00560">
    <property type="entry name" value="LamGL"/>
    <property type="match status" value="1"/>
</dbReference>
<dbReference type="SMART" id="SM00159">
    <property type="entry name" value="PTX"/>
    <property type="match status" value="1"/>
</dbReference>
<dbReference type="SUPFAM" id="SSF49899">
    <property type="entry name" value="Concanavalin A-like lectins/glucanases"/>
    <property type="match status" value="1"/>
</dbReference>
<dbReference type="PROSITE" id="PS00289">
    <property type="entry name" value="PTX_1"/>
    <property type="match status" value="1"/>
</dbReference>
<dbReference type="PROSITE" id="PS51828">
    <property type="entry name" value="PTX_2"/>
    <property type="match status" value="1"/>
</dbReference>
<reference key="1">
    <citation type="journal article" date="1992" name="J. Biol. Chem.">
        <title>Interleukin-1-inducible genes in endothelial cells. Cloning of a new gene related to C-reactive protein and serum amyloid P component.</title>
        <authorList>
            <person name="Breviario F."/>
            <person name="D'Aniello E.M."/>
            <person name="Golay J."/>
            <person name="Peri G."/>
            <person name="Bottazi B."/>
            <person name="Bairoch A."/>
            <person name="Saccone S."/>
            <person name="Marzella R."/>
            <person name="Predazzi V."/>
            <person name="Rocchi M."/>
            <person name="Della Valle G."/>
            <person name="Dejana E."/>
            <person name="Mantovani A."/>
            <person name="Introna M."/>
        </authorList>
    </citation>
    <scope>NUCLEOTIDE SEQUENCE [MRNA]</scope>
    <scope>VARIANT ASP-48</scope>
    <source>
        <tissue>Endothelial cell</tissue>
    </source>
</reference>
<reference key="2">
    <citation type="journal article" date="1993" name="Eur. Heart J.">
        <title>IL-1 inducible genes in human umbilical vein endothelial cells.</title>
        <authorList>
            <person name="Introna M."/>
            <person name="Breviario F."/>
            <person name="D'Aniello E.M."/>
            <person name="Golay J."/>
            <person name="Dejana E."/>
            <person name="Mantovani A."/>
        </authorList>
    </citation>
    <scope>NUCLEOTIDE SEQUENCE [MRNA]</scope>
    <scope>VARIANT ASP-48</scope>
    <source>
        <tissue>Endothelial cell</tissue>
    </source>
</reference>
<reference key="3">
    <citation type="journal article" date="1993" name="J. Immunol.">
        <title>TSG-14, a tumor necrosis factor- and IL-1-inducible protein, is a novel member of the pentaxin family of acute phase proteins.</title>
        <authorList>
            <person name="Lee G.W."/>
            <person name="Lee T.H."/>
            <person name="Vilcek J."/>
        </authorList>
    </citation>
    <scope>NUCLEOTIDE SEQUENCE [MRNA]</scope>
    <scope>VARIANT ASP-48</scope>
    <source>
        <tissue>Foreskin</tissue>
    </source>
</reference>
<reference key="4">
    <citation type="submission" date="2005-09" db="EMBL/GenBank/DDBJ databases">
        <title>Genetic variation in pentaxin-related protein PTX3.</title>
        <authorList>
            <person name="Tan J."/>
            <person name="Davila S."/>
            <person name="Hibberd M.L."/>
            <person name="Seielstad M."/>
        </authorList>
    </citation>
    <scope>NUCLEOTIDE SEQUENCE [GENOMIC DNA]</scope>
</reference>
<reference key="5">
    <citation type="journal article" date="2004" name="Nat. Genet.">
        <title>Complete sequencing and characterization of 21,243 full-length human cDNAs.</title>
        <authorList>
            <person name="Ota T."/>
            <person name="Suzuki Y."/>
            <person name="Nishikawa T."/>
            <person name="Otsuki T."/>
            <person name="Sugiyama T."/>
            <person name="Irie R."/>
            <person name="Wakamatsu A."/>
            <person name="Hayashi K."/>
            <person name="Sato H."/>
            <person name="Nagai K."/>
            <person name="Kimura K."/>
            <person name="Makita H."/>
            <person name="Sekine M."/>
            <person name="Obayashi M."/>
            <person name="Nishi T."/>
            <person name="Shibahara T."/>
            <person name="Tanaka T."/>
            <person name="Ishii S."/>
            <person name="Yamamoto J."/>
            <person name="Saito K."/>
            <person name="Kawai Y."/>
            <person name="Isono Y."/>
            <person name="Nakamura Y."/>
            <person name="Nagahari K."/>
            <person name="Murakami K."/>
            <person name="Yasuda T."/>
            <person name="Iwayanagi T."/>
            <person name="Wagatsuma M."/>
            <person name="Shiratori A."/>
            <person name="Sudo H."/>
            <person name="Hosoiri T."/>
            <person name="Kaku Y."/>
            <person name="Kodaira H."/>
            <person name="Kondo H."/>
            <person name="Sugawara M."/>
            <person name="Takahashi M."/>
            <person name="Kanda K."/>
            <person name="Yokoi T."/>
            <person name="Furuya T."/>
            <person name="Kikkawa E."/>
            <person name="Omura Y."/>
            <person name="Abe K."/>
            <person name="Kamihara K."/>
            <person name="Katsuta N."/>
            <person name="Sato K."/>
            <person name="Tanikawa M."/>
            <person name="Yamazaki M."/>
            <person name="Ninomiya K."/>
            <person name="Ishibashi T."/>
            <person name="Yamashita H."/>
            <person name="Murakawa K."/>
            <person name="Fujimori K."/>
            <person name="Tanai H."/>
            <person name="Kimata M."/>
            <person name="Watanabe M."/>
            <person name="Hiraoka S."/>
            <person name="Chiba Y."/>
            <person name="Ishida S."/>
            <person name="Ono Y."/>
            <person name="Takiguchi S."/>
            <person name="Watanabe S."/>
            <person name="Yosida M."/>
            <person name="Hotuta T."/>
            <person name="Kusano J."/>
            <person name="Kanehori K."/>
            <person name="Takahashi-Fujii A."/>
            <person name="Hara H."/>
            <person name="Tanase T.-O."/>
            <person name="Nomura Y."/>
            <person name="Togiya S."/>
            <person name="Komai F."/>
            <person name="Hara R."/>
            <person name="Takeuchi K."/>
            <person name="Arita M."/>
            <person name="Imose N."/>
            <person name="Musashino K."/>
            <person name="Yuuki H."/>
            <person name="Oshima A."/>
            <person name="Sasaki N."/>
            <person name="Aotsuka S."/>
            <person name="Yoshikawa Y."/>
            <person name="Matsunawa H."/>
            <person name="Ichihara T."/>
            <person name="Shiohata N."/>
            <person name="Sano S."/>
            <person name="Moriya S."/>
            <person name="Momiyama H."/>
            <person name="Satoh N."/>
            <person name="Takami S."/>
            <person name="Terashima Y."/>
            <person name="Suzuki O."/>
            <person name="Nakagawa S."/>
            <person name="Senoh A."/>
            <person name="Mizoguchi H."/>
            <person name="Goto Y."/>
            <person name="Shimizu F."/>
            <person name="Wakebe H."/>
            <person name="Hishigaki H."/>
            <person name="Watanabe T."/>
            <person name="Sugiyama A."/>
            <person name="Takemoto M."/>
            <person name="Kawakami B."/>
            <person name="Yamazaki M."/>
            <person name="Watanabe K."/>
            <person name="Kumagai A."/>
            <person name="Itakura S."/>
            <person name="Fukuzumi Y."/>
            <person name="Fujimori Y."/>
            <person name="Komiyama M."/>
            <person name="Tashiro H."/>
            <person name="Tanigami A."/>
            <person name="Fujiwara T."/>
            <person name="Ono T."/>
            <person name="Yamada K."/>
            <person name="Fujii Y."/>
            <person name="Ozaki K."/>
            <person name="Hirao M."/>
            <person name="Ohmori Y."/>
            <person name="Kawabata A."/>
            <person name="Hikiji T."/>
            <person name="Kobatake N."/>
            <person name="Inagaki H."/>
            <person name="Ikema Y."/>
            <person name="Okamoto S."/>
            <person name="Okitani R."/>
            <person name="Kawakami T."/>
            <person name="Noguchi S."/>
            <person name="Itoh T."/>
            <person name="Shigeta K."/>
            <person name="Senba T."/>
            <person name="Matsumura K."/>
            <person name="Nakajima Y."/>
            <person name="Mizuno T."/>
            <person name="Morinaga M."/>
            <person name="Sasaki M."/>
            <person name="Togashi T."/>
            <person name="Oyama M."/>
            <person name="Hata H."/>
            <person name="Watanabe M."/>
            <person name="Komatsu T."/>
            <person name="Mizushima-Sugano J."/>
            <person name="Satoh T."/>
            <person name="Shirai Y."/>
            <person name="Takahashi Y."/>
            <person name="Nakagawa K."/>
            <person name="Okumura K."/>
            <person name="Nagase T."/>
            <person name="Nomura N."/>
            <person name="Kikuchi H."/>
            <person name="Masuho Y."/>
            <person name="Yamashita R."/>
            <person name="Nakai K."/>
            <person name="Yada T."/>
            <person name="Nakamura Y."/>
            <person name="Ohara O."/>
            <person name="Isogai T."/>
            <person name="Sugano S."/>
        </authorList>
    </citation>
    <scope>NUCLEOTIDE SEQUENCE [LARGE SCALE MRNA]</scope>
</reference>
<reference key="6">
    <citation type="journal article" date="2006" name="Nature">
        <title>The DNA sequence, annotation and analysis of human chromosome 3.</title>
        <authorList>
            <person name="Muzny D.M."/>
            <person name="Scherer S.E."/>
            <person name="Kaul R."/>
            <person name="Wang J."/>
            <person name="Yu J."/>
            <person name="Sudbrak R."/>
            <person name="Buhay C.J."/>
            <person name="Chen R."/>
            <person name="Cree A."/>
            <person name="Ding Y."/>
            <person name="Dugan-Rocha S."/>
            <person name="Gill R."/>
            <person name="Gunaratne P."/>
            <person name="Harris R.A."/>
            <person name="Hawes A.C."/>
            <person name="Hernandez J."/>
            <person name="Hodgson A.V."/>
            <person name="Hume J."/>
            <person name="Jackson A."/>
            <person name="Khan Z.M."/>
            <person name="Kovar-Smith C."/>
            <person name="Lewis L.R."/>
            <person name="Lozado R.J."/>
            <person name="Metzker M.L."/>
            <person name="Milosavljevic A."/>
            <person name="Miner G.R."/>
            <person name="Morgan M.B."/>
            <person name="Nazareth L.V."/>
            <person name="Scott G."/>
            <person name="Sodergren E."/>
            <person name="Song X.-Z."/>
            <person name="Steffen D."/>
            <person name="Wei S."/>
            <person name="Wheeler D.A."/>
            <person name="Wright M.W."/>
            <person name="Worley K.C."/>
            <person name="Yuan Y."/>
            <person name="Zhang Z."/>
            <person name="Adams C.Q."/>
            <person name="Ansari-Lari M.A."/>
            <person name="Ayele M."/>
            <person name="Brown M.J."/>
            <person name="Chen G."/>
            <person name="Chen Z."/>
            <person name="Clendenning J."/>
            <person name="Clerc-Blankenburg K.P."/>
            <person name="Chen R."/>
            <person name="Chen Z."/>
            <person name="Davis C."/>
            <person name="Delgado O."/>
            <person name="Dinh H.H."/>
            <person name="Dong W."/>
            <person name="Draper H."/>
            <person name="Ernst S."/>
            <person name="Fu G."/>
            <person name="Gonzalez-Garay M.L."/>
            <person name="Garcia D.K."/>
            <person name="Gillett W."/>
            <person name="Gu J."/>
            <person name="Hao B."/>
            <person name="Haugen E."/>
            <person name="Havlak P."/>
            <person name="He X."/>
            <person name="Hennig S."/>
            <person name="Hu S."/>
            <person name="Huang W."/>
            <person name="Jackson L.R."/>
            <person name="Jacob L.S."/>
            <person name="Kelly S.H."/>
            <person name="Kube M."/>
            <person name="Levy R."/>
            <person name="Li Z."/>
            <person name="Liu B."/>
            <person name="Liu J."/>
            <person name="Liu W."/>
            <person name="Lu J."/>
            <person name="Maheshwari M."/>
            <person name="Nguyen B.-V."/>
            <person name="Okwuonu G.O."/>
            <person name="Palmeiri A."/>
            <person name="Pasternak S."/>
            <person name="Perez L.M."/>
            <person name="Phelps K.A."/>
            <person name="Plopper F.J."/>
            <person name="Qiang B."/>
            <person name="Raymond C."/>
            <person name="Rodriguez R."/>
            <person name="Saenphimmachak C."/>
            <person name="Santibanez J."/>
            <person name="Shen H."/>
            <person name="Shen Y."/>
            <person name="Subramanian S."/>
            <person name="Tabor P.E."/>
            <person name="Verduzco D."/>
            <person name="Waldron L."/>
            <person name="Wang J."/>
            <person name="Wang J."/>
            <person name="Wang Q."/>
            <person name="Williams G.A."/>
            <person name="Wong G.K.-S."/>
            <person name="Yao Z."/>
            <person name="Zhang J."/>
            <person name="Zhang X."/>
            <person name="Zhao G."/>
            <person name="Zhou J."/>
            <person name="Zhou Y."/>
            <person name="Nelson D."/>
            <person name="Lehrach H."/>
            <person name="Reinhardt R."/>
            <person name="Naylor S.L."/>
            <person name="Yang H."/>
            <person name="Olson M."/>
            <person name="Weinstock G."/>
            <person name="Gibbs R.A."/>
        </authorList>
    </citation>
    <scope>NUCLEOTIDE SEQUENCE [LARGE SCALE GENOMIC DNA]</scope>
</reference>
<reference key="7">
    <citation type="submission" date="2005-09" db="EMBL/GenBank/DDBJ databases">
        <authorList>
            <person name="Mural R.J."/>
            <person name="Istrail S."/>
            <person name="Sutton G.G."/>
            <person name="Florea L."/>
            <person name="Halpern A.L."/>
            <person name="Mobarry C.M."/>
            <person name="Lippert R."/>
            <person name="Walenz B."/>
            <person name="Shatkay H."/>
            <person name="Dew I."/>
            <person name="Miller J.R."/>
            <person name="Flanigan M.J."/>
            <person name="Edwards N.J."/>
            <person name="Bolanos R."/>
            <person name="Fasulo D."/>
            <person name="Halldorsson B.V."/>
            <person name="Hannenhalli S."/>
            <person name="Turner R."/>
            <person name="Yooseph S."/>
            <person name="Lu F."/>
            <person name="Nusskern D.R."/>
            <person name="Shue B.C."/>
            <person name="Zheng X.H."/>
            <person name="Zhong F."/>
            <person name="Delcher A.L."/>
            <person name="Huson D.H."/>
            <person name="Kravitz S.A."/>
            <person name="Mouchard L."/>
            <person name="Reinert K."/>
            <person name="Remington K.A."/>
            <person name="Clark A.G."/>
            <person name="Waterman M.S."/>
            <person name="Eichler E.E."/>
            <person name="Adams M.D."/>
            <person name="Hunkapiller M.W."/>
            <person name="Myers E.W."/>
            <person name="Venter J.C."/>
        </authorList>
    </citation>
    <scope>NUCLEOTIDE SEQUENCE [LARGE SCALE GENOMIC DNA]</scope>
</reference>
<reference key="8">
    <citation type="journal article" date="2004" name="Genome Res.">
        <title>The status, quality, and expansion of the NIH full-length cDNA project: the Mammalian Gene Collection (MGC).</title>
        <authorList>
            <consortium name="The MGC Project Team"/>
        </authorList>
    </citation>
    <scope>NUCLEOTIDE SEQUENCE [LARGE SCALE MRNA]</scope>
    <scope>VARIANT ASP-48</scope>
    <source>
        <tissue>Brain</tissue>
    </source>
</reference>
<reference key="9">
    <citation type="journal article" date="1994" name="J. Immunol.">
        <title>Relationship of TSG-14 protein to the pentraxin family of major acute phase proteins.</title>
        <authorList>
            <person name="Lee G.W."/>
            <person name="Goodman A.R."/>
            <person name="Lee T.H."/>
            <person name="Vilcek J."/>
        </authorList>
    </citation>
    <scope>DISCUSSION OF SEQUENCE</scope>
</reference>
<reference key="10">
    <citation type="journal article" date="2003" name="Vaccine">
        <title>Pentraxin 3, a non-redundant soluble pattern recognition receptor involved in innate immunity.</title>
        <authorList>
            <person name="Mantovani A."/>
            <person name="Garlanda C."/>
            <person name="Bottazzi B."/>
        </authorList>
    </citation>
    <scope>REVIEW</scope>
</reference>
<reference key="11">
    <citation type="journal article" date="2008" name="J. Biol. Chem.">
        <title>Structural characterization of PTX3 disulfide bond network and its multimeric status in cumulus matrix organization.</title>
        <authorList>
            <person name="Inforzato A."/>
            <person name="Rivieccio V."/>
            <person name="Morreale A.P."/>
            <person name="Bastone A."/>
            <person name="Salustri A."/>
            <person name="Scarchilli L."/>
            <person name="Verdoliva A."/>
            <person name="Vincenti S."/>
            <person name="Gallo G."/>
            <person name="Chiapparino C."/>
            <person name="Pacello L."/>
            <person name="Nucera E."/>
            <person name="Serlupi-Crescenzi O."/>
            <person name="Day A.J."/>
            <person name="Bottazzi B."/>
            <person name="Mantovani A."/>
            <person name="De Santis R."/>
            <person name="Salvatori G."/>
        </authorList>
    </citation>
    <scope>SUBUNIT</scope>
    <scope>DISULFIDE BONDS</scope>
</reference>
<reference key="12">
    <citation type="journal article" date="2022" name="Nat. Immunol.">
        <title>Recognition and inhibition of SARS-CoV-2 by humoral innate immunity pattern recognition molecules.</title>
        <authorList>
            <person name="Stravalaci M."/>
            <person name="Pagani I."/>
            <person name="Paraboschi E.M."/>
            <person name="Pedotti M."/>
            <person name="Doni A."/>
            <person name="Scavello F."/>
            <person name="Mapelli S.N."/>
            <person name="Sironi M."/>
            <person name="Perucchini C."/>
            <person name="Varani L."/>
            <person name="Matkovic M."/>
            <person name="Cavalli A."/>
            <person name="Cesana D."/>
            <person name="Gallina P."/>
            <person name="Pedemonte N."/>
            <person name="Capurro V."/>
            <person name="Clementi N."/>
            <person name="Mancini N."/>
            <person name="Invernizzi P."/>
            <person name="Bayarri-Olmos R."/>
            <person name="Garred P."/>
            <person name="Rappuoli R."/>
            <person name="Duga S."/>
            <person name="Bottazzi B."/>
            <person name="Uguccioni M."/>
            <person name="Asselta R."/>
            <person name="Vicenzi E."/>
            <person name="Mantovani A."/>
            <person name="Garlanda C."/>
        </authorList>
    </citation>
    <scope>INTERACTION WITH SARS-COV-2 NUCLEOPROTEIN AND SPIKE GLYCOPROTEIN (MICROBIAL FUNCTION)</scope>
</reference>
<accession>P26022</accession>
<accession>B2R6T6</accession>
<accession>Q38M82</accession>
<name>PTX3_HUMAN</name>
<protein>
    <recommendedName>
        <fullName evidence="10">Pentraxin-related protein PTX3</fullName>
    </recommendedName>
    <alternativeName>
        <fullName>Pentaxin-related protein PTX3</fullName>
    </alternativeName>
    <alternativeName>
        <fullName>Tumor necrosis factor alpha-induced protein 5</fullName>
        <shortName>TNF alpha-induced protein 5</shortName>
    </alternativeName>
    <alternativeName>
        <fullName>Tumor necrosis factor-inducible gene 14 protein</fullName>
        <shortName>TSG-14</shortName>
    </alternativeName>
</protein>
<proteinExistence type="evidence at protein level"/>
<gene>
    <name evidence="12" type="primary">PTX3</name>
    <name type="synonym">TNFAIP5</name>
    <name type="synonym">TSG14</name>
</gene>
<evidence type="ECO:0000250" key="1"/>
<evidence type="ECO:0000255" key="2"/>
<evidence type="ECO:0000255" key="3">
    <source>
        <dbReference type="PROSITE-ProRule" id="PRU01172"/>
    </source>
</evidence>
<evidence type="ECO:0000269" key="4">
    <source>
    </source>
</evidence>
<evidence type="ECO:0000269" key="5">
    <source>
    </source>
</evidence>
<evidence type="ECO:0000269" key="6">
    <source>
    </source>
</evidence>
<evidence type="ECO:0000269" key="7">
    <source>
    </source>
</evidence>
<evidence type="ECO:0000269" key="8">
    <source>
    </source>
</evidence>
<evidence type="ECO:0000269" key="9">
    <source>
    </source>
</evidence>
<evidence type="ECO:0000305" key="10"/>
<evidence type="ECO:0000305" key="11">
    <source>
    </source>
</evidence>
<evidence type="ECO:0000312" key="12">
    <source>
        <dbReference type="HGNC" id="HGNC:9692"/>
    </source>
</evidence>
<evidence type="ECO:0007829" key="13">
    <source>
        <dbReference type="PDB" id="7ZL1"/>
    </source>
</evidence>
<evidence type="ECO:0007829" key="14">
    <source>
        <dbReference type="PDB" id="8PVQ"/>
    </source>
</evidence>
<sequence>MHLLAILFCALWSAVLAENSDDYDLMYVNLDNEIDNGLHPTEDPTPCACGQEHSEWDKLFIMLENSQMRERMLLQATDDVLRGELQRLREELGRLAESLARPCAPGAPAEARLTSALDELLQATRDAGRRLARMEGAEAQRPEEAGRALAAVLEELRQTRADLHAVQGWAARSWLPAGCETAILFPMRSKKIFGSVHPVRPMRLESFSACIWVKATDVLNKTILFSYGTKRNPYEIQLYLSYQSIVFVVGGEENKLVAEAMVSLGRWTHLCGTWNSEEGLTSLWVNGELAATTVEMATGHIVPEGGILQIGQEKNGCCVGGGFDETLAFSGRLTGFNIWDSVLSNEEIRETGGAESCHIRGNIVGWGVTEIQPHGGAQYVS</sequence>
<feature type="signal peptide" evidence="2">
    <location>
        <begin position="1"/>
        <end position="17"/>
    </location>
</feature>
<feature type="chain" id="PRO_0000023545" description="Pentraxin-related protein PTX3">
    <location>
        <begin position="18"/>
        <end position="381"/>
    </location>
</feature>
<feature type="domain" description="Pentraxin (PTX)" evidence="3">
    <location>
        <begin position="179"/>
        <end position="381"/>
    </location>
</feature>
<feature type="coiled-coil region" evidence="2">
    <location>
        <begin position="74"/>
        <end position="101"/>
    </location>
</feature>
<feature type="coiled-coil region" evidence="2">
    <location>
        <begin position="143"/>
        <end position="167"/>
    </location>
</feature>
<feature type="glycosylation site" description="N-linked (GlcNAc...) asparagine" evidence="2">
    <location>
        <position position="220"/>
    </location>
</feature>
<feature type="disulfide bond" description="Interchain" evidence="6">
    <location>
        <position position="47"/>
    </location>
</feature>
<feature type="disulfide bond" description="Interchain" evidence="6">
    <location>
        <position position="49"/>
    </location>
</feature>
<feature type="disulfide bond" description="Interchain" evidence="6">
    <location>
        <position position="103"/>
    </location>
</feature>
<feature type="disulfide bond" evidence="6">
    <location>
        <begin position="179"/>
        <end position="357"/>
    </location>
</feature>
<feature type="disulfide bond" evidence="3 6">
    <location>
        <begin position="210"/>
        <end position="271"/>
    </location>
</feature>
<feature type="disulfide bond" description="Interchain" evidence="6">
    <location>
        <position position="317"/>
    </location>
</feature>
<feature type="disulfide bond" description="Interchain" evidence="6">
    <location>
        <position position="318"/>
    </location>
</feature>
<feature type="sequence variant" id="VAR_043140" description="In dbSNP:rs34655398.">
    <original>H</original>
    <variation>Q</variation>
    <location>
        <position position="39"/>
    </location>
</feature>
<feature type="sequence variant" id="VAR_043141" description="In dbSNP:rs3816527." evidence="4 5 8 9">
    <original>A</original>
    <variation>D</variation>
    <location>
        <position position="48"/>
    </location>
</feature>
<feature type="sequence variant" id="VAR_043142" description="In dbSNP:rs35415718.">
    <original>A</original>
    <variation>V</variation>
    <location>
        <position position="290"/>
    </location>
</feature>
<feature type="sequence variant" id="VAR_043143" description="In dbSNP:rs4478039.">
    <original>E</original>
    <variation>K</variation>
    <location>
        <position position="313"/>
    </location>
</feature>
<feature type="sequence conflict" description="In Ref. 3; AAA61234." evidence="10" ref="3">
    <original>M</original>
    <variation>L</variation>
    <location>
        <position position="202"/>
    </location>
</feature>
<feature type="helix" evidence="13">
    <location>
        <begin position="168"/>
        <end position="172"/>
    </location>
</feature>
<feature type="strand" evidence="13">
    <location>
        <begin position="176"/>
        <end position="178"/>
    </location>
</feature>
<feature type="strand" evidence="14">
    <location>
        <begin position="182"/>
        <end position="185"/>
    </location>
</feature>
<feature type="strand" evidence="14">
    <location>
        <begin position="193"/>
        <end position="197"/>
    </location>
</feature>
<feature type="strand" evidence="14">
    <location>
        <begin position="204"/>
        <end position="216"/>
    </location>
</feature>
<feature type="strand" evidence="14">
    <location>
        <begin position="220"/>
        <end position="228"/>
    </location>
</feature>
<feature type="strand" evidence="14">
    <location>
        <begin position="235"/>
        <end position="240"/>
    </location>
</feature>
<feature type="strand" evidence="14">
    <location>
        <begin position="245"/>
        <end position="251"/>
    </location>
</feature>
<feature type="strand" evidence="14">
    <location>
        <begin position="255"/>
        <end position="258"/>
    </location>
</feature>
<feature type="strand" evidence="14">
    <location>
        <begin position="268"/>
        <end position="275"/>
    </location>
</feature>
<feature type="turn" evidence="14">
    <location>
        <begin position="276"/>
        <end position="279"/>
    </location>
</feature>
<feature type="strand" evidence="14">
    <location>
        <begin position="280"/>
        <end position="285"/>
    </location>
</feature>
<feature type="strand" evidence="14">
    <location>
        <begin position="288"/>
        <end position="294"/>
    </location>
</feature>
<feature type="strand" evidence="14">
    <location>
        <begin position="307"/>
        <end position="312"/>
    </location>
</feature>
<feature type="strand" evidence="13">
    <location>
        <begin position="317"/>
        <end position="319"/>
    </location>
</feature>
<feature type="helix" evidence="14">
    <location>
        <begin position="325"/>
        <end position="327"/>
    </location>
</feature>
<feature type="strand" evidence="14">
    <location>
        <begin position="331"/>
        <end position="341"/>
    </location>
</feature>
<feature type="helix" evidence="14">
    <location>
        <begin position="345"/>
        <end position="351"/>
    </location>
</feature>
<feature type="helix" evidence="14">
    <location>
        <begin position="356"/>
        <end position="358"/>
    </location>
</feature>
<feature type="strand" evidence="14">
    <location>
        <begin position="362"/>
        <end position="364"/>
    </location>
</feature>
<feature type="turn" evidence="14">
    <location>
        <begin position="366"/>
        <end position="368"/>
    </location>
</feature>
<feature type="strand" evidence="14">
    <location>
        <begin position="369"/>
        <end position="374"/>
    </location>
</feature>
<feature type="strand" evidence="14">
    <location>
        <begin position="378"/>
        <end position="380"/>
    </location>
</feature>